<comment type="function">
    <text evidence="1">Involved in the degradation of specific anti-sigma factors. Responsible for Site-1 cleavage of the RsiW anti-sigma factor. This results, after two other proteolytic steps catalyzed by the RasP and ClpXP proteases, in the release of SigW and the transcription activation of the genes under the control of the sigma-W factor (By similarity).</text>
</comment>
<comment type="subcellular location">
    <subcellularLocation>
        <location evidence="3">Cell membrane</location>
        <topology evidence="3">Multi-pass membrane protein</topology>
    </subcellularLocation>
</comment>
<comment type="similarity">
    <text evidence="3">Belongs to the protease PrsW family.</text>
</comment>
<proteinExistence type="inferred from homology"/>
<organism>
    <name type="scientific">Shouchella clausii (strain KSM-K16)</name>
    <name type="common">Alkalihalobacillus clausii</name>
    <dbReference type="NCBI Taxonomy" id="66692"/>
    <lineage>
        <taxon>Bacteria</taxon>
        <taxon>Bacillati</taxon>
        <taxon>Bacillota</taxon>
        <taxon>Bacilli</taxon>
        <taxon>Bacillales</taxon>
        <taxon>Bacillaceae</taxon>
        <taxon>Shouchella</taxon>
    </lineage>
</organism>
<sequence>MVSLVLAALAPAMALFSYVYLRDVYSKAKMFLVLRIFIIGALLVVPILVIQFAFTEENVFPHPAAKAFLLYGFLEEGLKWLMLFVFAYQHGQLQRPGDGILFGVSVSLGFATVENGLYMIAYGLEAAIPRTVLPTTAHAVYGIVMGYYIGQAKYKEDHKKMFLLLGAILPILLHGGYDFILSSFGHYVLYAMIPFMVILWLLAIWKLKKASRFTV</sequence>
<keyword id="KW-1003">Cell membrane</keyword>
<keyword id="KW-0378">Hydrolase</keyword>
<keyword id="KW-0472">Membrane</keyword>
<keyword id="KW-0645">Protease</keyword>
<keyword id="KW-1185">Reference proteome</keyword>
<keyword id="KW-0812">Transmembrane</keyword>
<keyword id="KW-1133">Transmembrane helix</keyword>
<name>PRSW_SHOC1</name>
<protein>
    <recommendedName>
        <fullName>Protease PrsW</fullName>
        <ecNumber>3.4.-.-</ecNumber>
    </recommendedName>
    <alternativeName>
        <fullName>Protease responsible for activating sigma-W</fullName>
    </alternativeName>
</protein>
<dbReference type="EC" id="3.4.-.-"/>
<dbReference type="EMBL" id="AP006627">
    <property type="protein sequence ID" value="BAD64400.1"/>
    <property type="molecule type" value="Genomic_DNA"/>
</dbReference>
<dbReference type="RefSeq" id="WP_011246708.1">
    <property type="nucleotide sequence ID" value="NC_006582.1"/>
</dbReference>
<dbReference type="STRING" id="66692.ABC1865"/>
<dbReference type="KEGG" id="bcl:ABC1865"/>
<dbReference type="eggNOG" id="COG2339">
    <property type="taxonomic scope" value="Bacteria"/>
</dbReference>
<dbReference type="HOGENOM" id="CLU_081250_0_0_9"/>
<dbReference type="OrthoDB" id="5504276at2"/>
<dbReference type="Proteomes" id="UP000001168">
    <property type="component" value="Chromosome"/>
</dbReference>
<dbReference type="GO" id="GO:0005886">
    <property type="term" value="C:plasma membrane"/>
    <property type="evidence" value="ECO:0007669"/>
    <property type="project" value="UniProtKB-SubCell"/>
</dbReference>
<dbReference type="GO" id="GO:0008233">
    <property type="term" value="F:peptidase activity"/>
    <property type="evidence" value="ECO:0007669"/>
    <property type="project" value="UniProtKB-KW"/>
</dbReference>
<dbReference type="GO" id="GO:0006508">
    <property type="term" value="P:proteolysis"/>
    <property type="evidence" value="ECO:0007669"/>
    <property type="project" value="UniProtKB-KW"/>
</dbReference>
<dbReference type="InterPro" id="IPR023596">
    <property type="entry name" value="Peptidase_PrsW_arch/bac"/>
</dbReference>
<dbReference type="InterPro" id="IPR026898">
    <property type="entry name" value="PrsW"/>
</dbReference>
<dbReference type="NCBIfam" id="NF033739">
    <property type="entry name" value="intramemb_PrsW"/>
    <property type="match status" value="1"/>
</dbReference>
<dbReference type="PANTHER" id="PTHR36844">
    <property type="entry name" value="PROTEASE PRSW"/>
    <property type="match status" value="1"/>
</dbReference>
<dbReference type="PANTHER" id="PTHR36844:SF1">
    <property type="entry name" value="PROTEASE PRSW"/>
    <property type="match status" value="1"/>
</dbReference>
<dbReference type="Pfam" id="PF13367">
    <property type="entry name" value="PrsW-protease"/>
    <property type="match status" value="1"/>
</dbReference>
<dbReference type="PIRSF" id="PIRSF016933">
    <property type="entry name" value="PrsW"/>
    <property type="match status" value="1"/>
</dbReference>
<reference key="1">
    <citation type="submission" date="2003-10" db="EMBL/GenBank/DDBJ databases">
        <title>The complete genome sequence of the alkaliphilic Bacillus clausii KSM-K16.</title>
        <authorList>
            <person name="Takaki Y."/>
            <person name="Kageyama Y."/>
            <person name="Shimamura S."/>
            <person name="Suzuki H."/>
            <person name="Nishi S."/>
            <person name="Hatada Y."/>
            <person name="Kawai S."/>
            <person name="Ito S."/>
            <person name="Horikoshi K."/>
        </authorList>
    </citation>
    <scope>NUCLEOTIDE SEQUENCE [LARGE SCALE GENOMIC DNA]</scope>
    <source>
        <strain>KSM-K16</strain>
    </source>
</reference>
<feature type="chain" id="PRO_0000248135" description="Protease PrsW">
    <location>
        <begin position="1"/>
        <end position="215"/>
    </location>
</feature>
<feature type="transmembrane region" description="Helical" evidence="2">
    <location>
        <begin position="1"/>
        <end position="23"/>
    </location>
</feature>
<feature type="topological domain" description="Cytoplasmic" evidence="2">
    <location>
        <begin position="24"/>
        <end position="30"/>
    </location>
</feature>
<feature type="transmembrane region" description="Helical" evidence="2">
    <location>
        <begin position="31"/>
        <end position="53"/>
    </location>
</feature>
<feature type="topological domain" description="Extracellular" evidence="2">
    <location>
        <begin position="54"/>
        <end position="99"/>
    </location>
</feature>
<feature type="transmembrane region" description="Helical" evidence="2">
    <location>
        <begin position="100"/>
        <end position="121"/>
    </location>
</feature>
<feature type="topological domain" description="Cytoplasmic" evidence="2">
    <location>
        <begin position="122"/>
        <end position="129"/>
    </location>
</feature>
<feature type="transmembrane region" description="Helical" evidence="2">
    <location>
        <begin position="130"/>
        <end position="151"/>
    </location>
</feature>
<feature type="topological domain" description="Extracellular" evidence="2">
    <location>
        <begin position="152"/>
        <end position="179"/>
    </location>
</feature>
<feature type="transmembrane region" description="Helical" evidence="2">
    <location>
        <begin position="180"/>
        <end position="203"/>
    </location>
</feature>
<feature type="topological domain" description="Cytoplasmic" evidence="2">
    <location>
        <begin position="204"/>
        <end position="215"/>
    </location>
</feature>
<evidence type="ECO:0000250" key="1"/>
<evidence type="ECO:0000255" key="2"/>
<evidence type="ECO:0000305" key="3"/>
<gene>
    <name type="primary">prsW</name>
    <name type="ordered locus">ABC1865</name>
</gene>
<accession>Q5WGV5</accession>